<keyword id="KW-1015">Disulfide bond</keyword>
<keyword id="KW-0872">Ion channel impairing toxin</keyword>
<keyword id="KW-0528">Neurotoxin</keyword>
<keyword id="KW-0964">Secreted</keyword>
<keyword id="KW-0732">Signal</keyword>
<keyword id="KW-0800">Toxin</keyword>
<keyword id="KW-0738">Voltage-gated sodium channel impairing toxin</keyword>
<feature type="signal peptide" evidence="2">
    <location>
        <begin position="1"/>
        <end position="21"/>
    </location>
</feature>
<feature type="chain" id="PRO_0000035264" description="Anti-neuroexcitation peptide 2">
    <location>
        <begin position="22"/>
        <end position="85"/>
    </location>
</feature>
<feature type="domain" description="LCN-type CS-alpha/beta" evidence="3">
    <location>
        <begin position="22"/>
        <end position="82"/>
    </location>
</feature>
<feature type="site" description="Binds the drosophila sodium channel DmNav1" evidence="5">
    <location>
        <position position="55"/>
    </location>
</feature>
<feature type="site" description="Binds the drosophila sodium channel DmNav1" evidence="5">
    <location>
        <position position="57"/>
    </location>
</feature>
<feature type="site" description="Binds the drosophila sodium channel DmNav1" evidence="5">
    <location>
        <position position="60"/>
    </location>
</feature>
<feature type="site" description="Binds the drosophila sodium channel DmNav1" evidence="5">
    <location>
        <position position="61"/>
    </location>
</feature>
<feature type="site" description="Binds the drosophila sodium channel DmNav1" evidence="5">
    <location>
        <position position="74"/>
    </location>
</feature>
<feature type="site" description="Binds the drosophila sodium channel DmNav1" evidence="5">
    <location>
        <position position="79"/>
    </location>
</feature>
<feature type="site" description="Binds the drosophila sodium channel DmNav1" evidence="5">
    <location>
        <position position="82"/>
    </location>
</feature>
<feature type="site" description="Binds the drosophila sodium channel DmNav1" evidence="5">
    <location>
        <position position="83"/>
    </location>
</feature>
<feature type="disulfide bond" evidence="3">
    <location>
        <begin position="31"/>
        <end position="81"/>
    </location>
</feature>
<feature type="disulfide bond" evidence="3">
    <location>
        <begin position="35"/>
        <end position="56"/>
    </location>
</feature>
<feature type="disulfide bond" evidence="3">
    <location>
        <begin position="42"/>
        <end position="63"/>
    </location>
</feature>
<feature type="disulfide bond" evidence="3">
    <location>
        <begin position="46"/>
        <end position="65"/>
    </location>
</feature>
<sequence length="85" mass="9225">MKLSLLLVISASMLIDGLVNADGYIRGSNGCKVSCLWGNDGCNKECRAYGASYGYCWTWGLACWCEGLPDDKTWKSESNTCGGKK</sequence>
<organism>
    <name type="scientific">Olivierus martensii</name>
    <name type="common">Manchurian scorpion</name>
    <name type="synonym">Mesobuthus martensii</name>
    <dbReference type="NCBI Taxonomy" id="34649"/>
    <lineage>
        <taxon>Eukaryota</taxon>
        <taxon>Metazoa</taxon>
        <taxon>Ecdysozoa</taxon>
        <taxon>Arthropoda</taxon>
        <taxon>Chelicerata</taxon>
        <taxon>Arachnida</taxon>
        <taxon>Scorpiones</taxon>
        <taxon>Buthida</taxon>
        <taxon>Buthoidea</taxon>
        <taxon>Buthidae</taxon>
        <taxon>Olivierus</taxon>
    </lineage>
</organism>
<protein>
    <recommendedName>
        <fullName>Anti-neuroexcitation peptide 2</fullName>
        <shortName>BmKANEP2</shortName>
    </recommendedName>
    <alternativeName>
        <fullName>Anti-neuroexcitation peptide II</fullName>
        <shortName>ANEPII</shortName>
    </alternativeName>
</protein>
<proteinExistence type="evidence at protein level"/>
<reference key="1">
    <citation type="submission" date="2000-03" db="EMBL/GenBank/DDBJ databases">
        <title>Cloning of anti-neuroexcitation peptide II (ANEP) cDNA from Scorpion Buthus martensii Karsch.</title>
        <authorList>
            <person name="Zhang J.-H."/>
            <person name="Hua Z.C."/>
            <person name="Zhu D.X."/>
        </authorList>
    </citation>
    <scope>NUCLEOTIDE SEQUENCE [MRNA]</scope>
    <source>
        <tissue>Venom gland</tissue>
    </source>
</reference>
<reference key="2">
    <citation type="journal article" date="2001" name="Prep. Biochem. Biotechnol.">
        <title>Expression of anti-neuroexcitation peptide (ANEP) of scorpion Buthus martensii Karsch in Escherichia coli.</title>
        <authorList>
            <person name="Zhang J.-H."/>
            <person name="Hua Z.C."/>
            <person name="Xu Z."/>
            <person name="Zheng W.J."/>
            <person name="Zhu D.X."/>
        </authorList>
    </citation>
    <scope>FUNCTION</scope>
</reference>
<reference key="3">
    <citation type="journal article" date="2010" name="C. R. Biol.">
        <title>Study of the binding residues between ANEPII and insect sodium channel receptor.</title>
        <authorList>
            <person name="Song Y.B."/>
            <person name="Ma L."/>
            <person name="Yang W.Y."/>
            <person name="Wang J."/>
            <person name="Cheng M.S."/>
            <person name="Wu C.F."/>
            <person name="Zhang J.H."/>
        </authorList>
    </citation>
    <scope>3D-STRUCTURE MODELING OF BMKANEP2-DMNAV1 INTERACTION</scope>
</reference>
<evidence type="ECO:0000250" key="1"/>
<evidence type="ECO:0000255" key="2"/>
<evidence type="ECO:0000255" key="3">
    <source>
        <dbReference type="PROSITE-ProRule" id="PRU01210"/>
    </source>
</evidence>
<evidence type="ECO:0000269" key="4">
    <source>
    </source>
</evidence>
<evidence type="ECO:0000305" key="5"/>
<dbReference type="EMBL" id="AF242736">
    <property type="protein sequence ID" value="AAK28341.1"/>
    <property type="molecule type" value="mRNA"/>
</dbReference>
<dbReference type="SMR" id="Q9BKJ1"/>
<dbReference type="GO" id="GO:0005576">
    <property type="term" value="C:extracellular region"/>
    <property type="evidence" value="ECO:0007669"/>
    <property type="project" value="UniProtKB-SubCell"/>
</dbReference>
<dbReference type="GO" id="GO:0019871">
    <property type="term" value="F:sodium channel inhibitor activity"/>
    <property type="evidence" value="ECO:0007669"/>
    <property type="project" value="InterPro"/>
</dbReference>
<dbReference type="GO" id="GO:0090729">
    <property type="term" value="F:toxin activity"/>
    <property type="evidence" value="ECO:0007669"/>
    <property type="project" value="UniProtKB-KW"/>
</dbReference>
<dbReference type="GO" id="GO:0006952">
    <property type="term" value="P:defense response"/>
    <property type="evidence" value="ECO:0007669"/>
    <property type="project" value="InterPro"/>
</dbReference>
<dbReference type="CDD" id="cd23106">
    <property type="entry name" value="neurotoxins_LC_scorpion"/>
    <property type="match status" value="1"/>
</dbReference>
<dbReference type="FunFam" id="3.30.30.10:FF:000002">
    <property type="entry name" value="Alpha-like toxin BmK-M1"/>
    <property type="match status" value="1"/>
</dbReference>
<dbReference type="Gene3D" id="3.30.30.10">
    <property type="entry name" value="Knottin, scorpion toxin-like"/>
    <property type="match status" value="1"/>
</dbReference>
<dbReference type="InterPro" id="IPR044062">
    <property type="entry name" value="LCN-type_CS_alpha_beta_dom"/>
</dbReference>
<dbReference type="InterPro" id="IPR003614">
    <property type="entry name" value="Scorpion_toxin-like"/>
</dbReference>
<dbReference type="InterPro" id="IPR036574">
    <property type="entry name" value="Scorpion_toxin-like_sf"/>
</dbReference>
<dbReference type="InterPro" id="IPR018218">
    <property type="entry name" value="Scorpion_toxinL"/>
</dbReference>
<dbReference type="InterPro" id="IPR002061">
    <property type="entry name" value="Scorpion_toxinL/defensin"/>
</dbReference>
<dbReference type="Pfam" id="PF00537">
    <property type="entry name" value="Toxin_3"/>
    <property type="match status" value="1"/>
</dbReference>
<dbReference type="PRINTS" id="PR00285">
    <property type="entry name" value="SCORPNTOXIN"/>
</dbReference>
<dbReference type="SMART" id="SM00505">
    <property type="entry name" value="Knot1"/>
    <property type="match status" value="1"/>
</dbReference>
<dbReference type="SUPFAM" id="SSF57095">
    <property type="entry name" value="Scorpion toxin-like"/>
    <property type="match status" value="1"/>
</dbReference>
<dbReference type="PROSITE" id="PS51863">
    <property type="entry name" value="LCN_CSAB"/>
    <property type="match status" value="1"/>
</dbReference>
<name>SCN2_OLIMR</name>
<accession>Q9BKJ1</accession>
<comment type="function">
    <text evidence="1 4">Binds to sodium channels (Nav) and inhibits them (By similarity). Recombinant ANEP delays the convulsion seizure of insect models by 18% and shows anti-neuroexcitatory activity.</text>
</comment>
<comment type="subcellular location">
    <subcellularLocation>
        <location evidence="1">Secreted</location>
    </subcellularLocation>
</comment>
<comment type="tissue specificity">
    <text>Expressed by the venom gland.</text>
</comment>
<comment type="domain">
    <text evidence="5">Has the structural arrangement of an alpha-helix connected to antiparallel beta-sheets by disulfide bonds (CS-alpha/beta).</text>
</comment>
<comment type="similarity">
    <text evidence="5">Belongs to the long (4 C-C) scorpion toxin superfamily. Sodium channel inhibitor family. Beta subfamily.</text>
</comment>